<gene>
    <name evidence="1" type="primary">ftsH</name>
    <name type="synonym">hflB</name>
    <name type="ordered locus">STM3296</name>
</gene>
<evidence type="ECO:0000255" key="1">
    <source>
        <dbReference type="HAMAP-Rule" id="MF_01458"/>
    </source>
</evidence>
<evidence type="ECO:0000256" key="2">
    <source>
        <dbReference type="SAM" id="MobiDB-lite"/>
    </source>
</evidence>
<sequence>MAKNLILWLVIAVVLMSVFQSFGPSESNGRKVDYSTFLQEVNQDQVREARINGREINVTKKDSNRYTTYIPINDPKLLDNLLTKNVKVVGEPPEEPSLLASIFISWFPMLLLIGVWIFFMRQMQGGGGKGAMSFGKSKARMLTEDQIKTTFADVAGCDEAKEEVAELVEYLREPSRFQKLGGKIPKGVLMVGPPGTGKTLLAKAIAGEAKVPFFTISGSDFVEMFVGVGASRVRDMFEQAKKAAPCIIFIDEIDAVGRQRGAGLGGGHDEREQTLNQMLVEMDGFEGNEGIIVIAATNRPDVLDPALLRPGRFDRQVVVGLPDVRGREQILKVHMRRVPLATDIDAAIIARGTPGFSGADLANLVNEAALFAARGNKRVVSMVEFEKAKDKIMMGAERRSMVMTEAQKESTAYHEAGHAIIGRLVPEHDPVHKVTIIPRGRALGVTFFLPEGDAISASRQKLESQISTLYGGRLAEEIIYGVEHVSTGASNDIKVATNLARNMVTQWGFSEKLGPLLYAEEEGEVFLGRSVAKAKHMSDETARIIDQEVKALIERNYNRARQILTDNMDILHAMKDALMKYETIDAPQIDDLMARREVRPPAGWEDPNGTNNSDSNGTPQAPRPVDEPRTPNPGNTMSEQLGDK</sequence>
<comment type="function">
    <text evidence="1">Acts as a processive, ATP-dependent zinc metallopeptidase for both cytoplasmic and membrane proteins. Plays a role in the quality control of integral membrane proteins.</text>
</comment>
<comment type="cofactor">
    <cofactor evidence="1">
        <name>Zn(2+)</name>
        <dbReference type="ChEBI" id="CHEBI:29105"/>
    </cofactor>
    <text evidence="1">Binds 1 zinc ion per subunit.</text>
</comment>
<comment type="subunit">
    <text evidence="1">Homohexamer.</text>
</comment>
<comment type="subcellular location">
    <subcellularLocation>
        <location evidence="1">Cell inner membrane</location>
        <topology evidence="1">Multi-pass membrane protein</topology>
        <orientation evidence="1">Cytoplasmic side</orientation>
    </subcellularLocation>
</comment>
<comment type="similarity">
    <text evidence="1">In the central section; belongs to the AAA ATPase family.</text>
</comment>
<comment type="similarity">
    <text evidence="1">In the C-terminal section; belongs to the peptidase M41 family.</text>
</comment>
<name>FTSH_SALTY</name>
<protein>
    <recommendedName>
        <fullName evidence="1">ATP-dependent zinc metalloprotease FtsH</fullName>
        <ecNumber evidence="1">3.4.24.-</ecNumber>
    </recommendedName>
</protein>
<proteinExistence type="inferred from homology"/>
<feature type="chain" id="PRO_0000084648" description="ATP-dependent zinc metalloprotease FtsH">
    <location>
        <begin position="1"/>
        <end position="644"/>
    </location>
</feature>
<feature type="topological domain" description="Cytoplasmic" evidence="1">
    <location>
        <begin position="1"/>
        <end position="4"/>
    </location>
</feature>
<feature type="transmembrane region" description="Helical" evidence="1">
    <location>
        <begin position="5"/>
        <end position="25"/>
    </location>
</feature>
<feature type="topological domain" description="Periplasmic" evidence="1">
    <location>
        <begin position="26"/>
        <end position="98"/>
    </location>
</feature>
<feature type="transmembrane region" description="Helical" evidence="1">
    <location>
        <begin position="99"/>
        <end position="119"/>
    </location>
</feature>
<feature type="topological domain" description="Cytoplasmic" evidence="1">
    <location>
        <begin position="120"/>
        <end position="644"/>
    </location>
</feature>
<feature type="region of interest" description="Disordered" evidence="2">
    <location>
        <begin position="599"/>
        <end position="644"/>
    </location>
</feature>
<feature type="compositionally biased region" description="Polar residues" evidence="2">
    <location>
        <begin position="608"/>
        <end position="619"/>
    </location>
</feature>
<feature type="compositionally biased region" description="Polar residues" evidence="2">
    <location>
        <begin position="632"/>
        <end position="644"/>
    </location>
</feature>
<feature type="active site" evidence="1">
    <location>
        <position position="415"/>
    </location>
</feature>
<feature type="binding site" evidence="1">
    <location>
        <begin position="192"/>
        <end position="199"/>
    </location>
    <ligand>
        <name>ATP</name>
        <dbReference type="ChEBI" id="CHEBI:30616"/>
    </ligand>
</feature>
<feature type="binding site" evidence="1">
    <location>
        <position position="414"/>
    </location>
    <ligand>
        <name>Zn(2+)</name>
        <dbReference type="ChEBI" id="CHEBI:29105"/>
        <note>catalytic</note>
    </ligand>
</feature>
<feature type="binding site" evidence="1">
    <location>
        <position position="418"/>
    </location>
    <ligand>
        <name>Zn(2+)</name>
        <dbReference type="ChEBI" id="CHEBI:29105"/>
        <note>catalytic</note>
    </ligand>
</feature>
<feature type="binding site" evidence="1">
    <location>
        <position position="492"/>
    </location>
    <ligand>
        <name>Zn(2+)</name>
        <dbReference type="ChEBI" id="CHEBI:29105"/>
        <note>catalytic</note>
    </ligand>
</feature>
<accession>P63343</accession>
<accession>Q8XGY2</accession>
<reference key="1">
    <citation type="journal article" date="2001" name="Nature">
        <title>Complete genome sequence of Salmonella enterica serovar Typhimurium LT2.</title>
        <authorList>
            <person name="McClelland M."/>
            <person name="Sanderson K.E."/>
            <person name="Spieth J."/>
            <person name="Clifton S.W."/>
            <person name="Latreille P."/>
            <person name="Courtney L."/>
            <person name="Porwollik S."/>
            <person name="Ali J."/>
            <person name="Dante M."/>
            <person name="Du F."/>
            <person name="Hou S."/>
            <person name="Layman D."/>
            <person name="Leonard S."/>
            <person name="Nguyen C."/>
            <person name="Scott K."/>
            <person name="Holmes A."/>
            <person name="Grewal N."/>
            <person name="Mulvaney E."/>
            <person name="Ryan E."/>
            <person name="Sun H."/>
            <person name="Florea L."/>
            <person name="Miller W."/>
            <person name="Stoneking T."/>
            <person name="Nhan M."/>
            <person name="Waterston R."/>
            <person name="Wilson R.K."/>
        </authorList>
    </citation>
    <scope>NUCLEOTIDE SEQUENCE [LARGE SCALE GENOMIC DNA]</scope>
    <source>
        <strain>LT2 / SGSC1412 / ATCC 700720</strain>
    </source>
</reference>
<dbReference type="EC" id="3.4.24.-" evidence="1"/>
<dbReference type="EMBL" id="AE006468">
    <property type="protein sequence ID" value="AAL22166.1"/>
    <property type="molecule type" value="Genomic_DNA"/>
</dbReference>
<dbReference type="RefSeq" id="NP_462207.1">
    <property type="nucleotide sequence ID" value="NC_003197.2"/>
</dbReference>
<dbReference type="RefSeq" id="WP_001107481.1">
    <property type="nucleotide sequence ID" value="NC_003197.2"/>
</dbReference>
<dbReference type="SMR" id="P63343"/>
<dbReference type="STRING" id="99287.STM3296"/>
<dbReference type="MEROPS" id="M41.001"/>
<dbReference type="PaxDb" id="99287-STM3296"/>
<dbReference type="GeneID" id="1254819"/>
<dbReference type="GeneID" id="66757635"/>
<dbReference type="KEGG" id="stm:STM3296"/>
<dbReference type="PATRIC" id="fig|99287.12.peg.3494"/>
<dbReference type="HOGENOM" id="CLU_000688_16_0_6"/>
<dbReference type="OMA" id="LFLMNQM"/>
<dbReference type="PhylomeDB" id="P63343"/>
<dbReference type="BioCyc" id="SENT99287:STM3296-MONOMER"/>
<dbReference type="Proteomes" id="UP000001014">
    <property type="component" value="Chromosome"/>
</dbReference>
<dbReference type="GO" id="GO:0005886">
    <property type="term" value="C:plasma membrane"/>
    <property type="evidence" value="ECO:0000318"/>
    <property type="project" value="GO_Central"/>
</dbReference>
<dbReference type="GO" id="GO:0005524">
    <property type="term" value="F:ATP binding"/>
    <property type="evidence" value="ECO:0007669"/>
    <property type="project" value="UniProtKB-UniRule"/>
</dbReference>
<dbReference type="GO" id="GO:0016887">
    <property type="term" value="F:ATP hydrolysis activity"/>
    <property type="evidence" value="ECO:0007669"/>
    <property type="project" value="UniProtKB-UniRule"/>
</dbReference>
<dbReference type="GO" id="GO:0004176">
    <property type="term" value="F:ATP-dependent peptidase activity"/>
    <property type="evidence" value="ECO:0000318"/>
    <property type="project" value="GO_Central"/>
</dbReference>
<dbReference type="GO" id="GO:0004222">
    <property type="term" value="F:metalloendopeptidase activity"/>
    <property type="evidence" value="ECO:0007669"/>
    <property type="project" value="InterPro"/>
</dbReference>
<dbReference type="GO" id="GO:0008270">
    <property type="term" value="F:zinc ion binding"/>
    <property type="evidence" value="ECO:0007669"/>
    <property type="project" value="UniProtKB-UniRule"/>
</dbReference>
<dbReference type="GO" id="GO:0030163">
    <property type="term" value="P:protein catabolic process"/>
    <property type="evidence" value="ECO:0000318"/>
    <property type="project" value="GO_Central"/>
</dbReference>
<dbReference type="GO" id="GO:0006508">
    <property type="term" value="P:proteolysis"/>
    <property type="evidence" value="ECO:0000318"/>
    <property type="project" value="GO_Central"/>
</dbReference>
<dbReference type="CDD" id="cd19501">
    <property type="entry name" value="RecA-like_FtsH"/>
    <property type="match status" value="1"/>
</dbReference>
<dbReference type="FunFam" id="1.10.8.60:FF:000001">
    <property type="entry name" value="ATP-dependent zinc metalloprotease FtsH"/>
    <property type="match status" value="1"/>
</dbReference>
<dbReference type="FunFam" id="1.20.58.760:FF:000001">
    <property type="entry name" value="ATP-dependent zinc metalloprotease FtsH"/>
    <property type="match status" value="1"/>
</dbReference>
<dbReference type="FunFam" id="3.30.720.210:FF:000001">
    <property type="entry name" value="ATP-dependent zinc metalloprotease FtsH"/>
    <property type="match status" value="1"/>
</dbReference>
<dbReference type="FunFam" id="3.40.50.300:FF:000001">
    <property type="entry name" value="ATP-dependent zinc metalloprotease FtsH"/>
    <property type="match status" value="1"/>
</dbReference>
<dbReference type="Gene3D" id="1.10.8.60">
    <property type="match status" value="1"/>
</dbReference>
<dbReference type="Gene3D" id="3.30.720.210">
    <property type="match status" value="1"/>
</dbReference>
<dbReference type="Gene3D" id="3.40.50.300">
    <property type="entry name" value="P-loop containing nucleotide triphosphate hydrolases"/>
    <property type="match status" value="1"/>
</dbReference>
<dbReference type="Gene3D" id="1.20.58.760">
    <property type="entry name" value="Peptidase M41"/>
    <property type="match status" value="1"/>
</dbReference>
<dbReference type="HAMAP" id="MF_01458">
    <property type="entry name" value="FtsH"/>
    <property type="match status" value="1"/>
</dbReference>
<dbReference type="InterPro" id="IPR003593">
    <property type="entry name" value="AAA+_ATPase"/>
</dbReference>
<dbReference type="InterPro" id="IPR041569">
    <property type="entry name" value="AAA_lid_3"/>
</dbReference>
<dbReference type="InterPro" id="IPR003959">
    <property type="entry name" value="ATPase_AAA_core"/>
</dbReference>
<dbReference type="InterPro" id="IPR003960">
    <property type="entry name" value="ATPase_AAA_CS"/>
</dbReference>
<dbReference type="InterPro" id="IPR005936">
    <property type="entry name" value="FtsH"/>
</dbReference>
<dbReference type="InterPro" id="IPR027417">
    <property type="entry name" value="P-loop_NTPase"/>
</dbReference>
<dbReference type="InterPro" id="IPR011546">
    <property type="entry name" value="Pept_M41_FtsH_extracell"/>
</dbReference>
<dbReference type="InterPro" id="IPR000642">
    <property type="entry name" value="Peptidase_M41"/>
</dbReference>
<dbReference type="InterPro" id="IPR037219">
    <property type="entry name" value="Peptidase_M41-like"/>
</dbReference>
<dbReference type="NCBIfam" id="TIGR01241">
    <property type="entry name" value="FtsH_fam"/>
    <property type="match status" value="1"/>
</dbReference>
<dbReference type="NCBIfam" id="NF008004">
    <property type="entry name" value="PRK10733.1"/>
    <property type="match status" value="1"/>
</dbReference>
<dbReference type="PANTHER" id="PTHR23076:SF97">
    <property type="entry name" value="ATP-DEPENDENT ZINC METALLOPROTEASE YME1L1"/>
    <property type="match status" value="1"/>
</dbReference>
<dbReference type="PANTHER" id="PTHR23076">
    <property type="entry name" value="METALLOPROTEASE M41 FTSH"/>
    <property type="match status" value="1"/>
</dbReference>
<dbReference type="Pfam" id="PF00004">
    <property type="entry name" value="AAA"/>
    <property type="match status" value="1"/>
</dbReference>
<dbReference type="Pfam" id="PF17862">
    <property type="entry name" value="AAA_lid_3"/>
    <property type="match status" value="1"/>
</dbReference>
<dbReference type="Pfam" id="PF06480">
    <property type="entry name" value="FtsH_ext"/>
    <property type="match status" value="1"/>
</dbReference>
<dbReference type="Pfam" id="PF01434">
    <property type="entry name" value="Peptidase_M41"/>
    <property type="match status" value="1"/>
</dbReference>
<dbReference type="SMART" id="SM00382">
    <property type="entry name" value="AAA"/>
    <property type="match status" value="1"/>
</dbReference>
<dbReference type="SUPFAM" id="SSF140990">
    <property type="entry name" value="FtsH protease domain-like"/>
    <property type="match status" value="1"/>
</dbReference>
<dbReference type="SUPFAM" id="SSF52540">
    <property type="entry name" value="P-loop containing nucleoside triphosphate hydrolases"/>
    <property type="match status" value="1"/>
</dbReference>
<dbReference type="PROSITE" id="PS00674">
    <property type="entry name" value="AAA"/>
    <property type="match status" value="1"/>
</dbReference>
<keyword id="KW-0067">ATP-binding</keyword>
<keyword id="KW-0997">Cell inner membrane</keyword>
<keyword id="KW-1003">Cell membrane</keyword>
<keyword id="KW-0378">Hydrolase</keyword>
<keyword id="KW-0472">Membrane</keyword>
<keyword id="KW-0479">Metal-binding</keyword>
<keyword id="KW-0482">Metalloprotease</keyword>
<keyword id="KW-0547">Nucleotide-binding</keyword>
<keyword id="KW-0645">Protease</keyword>
<keyword id="KW-1185">Reference proteome</keyword>
<keyword id="KW-0812">Transmembrane</keyword>
<keyword id="KW-1133">Transmembrane helix</keyword>
<keyword id="KW-0862">Zinc</keyword>
<organism>
    <name type="scientific">Salmonella typhimurium (strain LT2 / SGSC1412 / ATCC 700720)</name>
    <dbReference type="NCBI Taxonomy" id="99287"/>
    <lineage>
        <taxon>Bacteria</taxon>
        <taxon>Pseudomonadati</taxon>
        <taxon>Pseudomonadota</taxon>
        <taxon>Gammaproteobacteria</taxon>
        <taxon>Enterobacterales</taxon>
        <taxon>Enterobacteriaceae</taxon>
        <taxon>Salmonella</taxon>
    </lineage>
</organism>